<reference key="1">
    <citation type="journal article" date="2009" name="PLoS ONE">
        <title>Non mycobacterial virulence genes in the genome of the emerging pathogen Mycobacterium abscessus.</title>
        <authorList>
            <person name="Ripoll F."/>
            <person name="Pasek S."/>
            <person name="Schenowitz C."/>
            <person name="Dossat C."/>
            <person name="Barbe V."/>
            <person name="Rottman M."/>
            <person name="Macheras E."/>
            <person name="Heym B."/>
            <person name="Herrmann J.L."/>
            <person name="Daffe M."/>
            <person name="Brosch R."/>
            <person name="Risler J.L."/>
            <person name="Gaillard J.L."/>
        </authorList>
    </citation>
    <scope>NUCLEOTIDE SEQUENCE [LARGE SCALE GENOMIC DNA]</scope>
    <source>
        <strain>ATCC 19977 / DSM 44196 / CCUG 20993 / CIP 104536 / JCM 13569 / NCTC 13031 / TMC 1543 / L948</strain>
    </source>
</reference>
<sequence>MTRTQYGSLRAGGLNWDSMPLKLFAGGNAKFWDPAGIDFSRDRADWESLTERERDYATRLCAQFIAGEESVTQDIQPFMSAMRAEGRLGDEMYLTQFAFEEAKHTQVFRLWLDAVGVSEDLHGYLDDLPAYREIFFDRLPDALGMLAADPSPAAQVRASVTYNHVVEGMLALTGYFAWHKICVDRGILPGMQELVHRIGDDERRHMAWGTFTCRRHVAADDANWSVFEARMNELIPIALRLTEEGFELYGDDTPFGLSLDEFMQYSADKGMRRFGTISSARGRPLAEIDLDYSPLQLEDTFAAEDRQALAATA</sequence>
<gene>
    <name type="ordered locus">MAB_4007c</name>
</gene>
<evidence type="ECO:0000250" key="1">
    <source>
        <dbReference type="UniProtKB" id="P9WH69"/>
    </source>
</evidence>
<evidence type="ECO:0000305" key="2"/>
<name>RIR2H_MYCA9</name>
<keyword id="KW-0408">Iron</keyword>
<keyword id="KW-0464">Manganese</keyword>
<keyword id="KW-0479">Metal-binding</keyword>
<keyword id="KW-0560">Oxidoreductase</keyword>
<keyword id="KW-1185">Reference proteome</keyword>
<accession>B1MHK0</accession>
<proteinExistence type="inferred from homology"/>
<organism>
    <name type="scientific">Mycobacteroides abscessus (strain ATCC 19977 / DSM 44196 / CCUG 20993 / CIP 104536 / JCM 13569 / NCTC 13031 / TMC 1543 / L948)</name>
    <name type="common">Mycobacterium abscessus</name>
    <dbReference type="NCBI Taxonomy" id="561007"/>
    <lineage>
        <taxon>Bacteria</taxon>
        <taxon>Bacillati</taxon>
        <taxon>Actinomycetota</taxon>
        <taxon>Actinomycetes</taxon>
        <taxon>Mycobacteriales</taxon>
        <taxon>Mycobacteriaceae</taxon>
        <taxon>Mycobacteroides</taxon>
        <taxon>Mycobacteroides abscessus</taxon>
    </lineage>
</organism>
<protein>
    <recommendedName>
        <fullName evidence="1">R2-like ligand binding oxidase</fullName>
        <ecNumber evidence="1">1.-.-.-</ecNumber>
    </recommendedName>
    <alternativeName>
        <fullName>Ribonucleotide reductase R2 subunit homolog</fullName>
    </alternativeName>
    <alternativeName>
        <fullName>Ribonucleotide reductase small subunit homolog</fullName>
    </alternativeName>
</protein>
<dbReference type="EC" id="1.-.-.-" evidence="1"/>
<dbReference type="EMBL" id="CU458896">
    <property type="protein sequence ID" value="CAM64081.1"/>
    <property type="molecule type" value="Genomic_DNA"/>
</dbReference>
<dbReference type="RefSeq" id="WP_005094720.1">
    <property type="nucleotide sequence ID" value="NZ_MLCG01000001.1"/>
</dbReference>
<dbReference type="SMR" id="B1MHK0"/>
<dbReference type="GeneID" id="93380952"/>
<dbReference type="KEGG" id="mab:MAB_4007c"/>
<dbReference type="Proteomes" id="UP000007137">
    <property type="component" value="Chromosome"/>
</dbReference>
<dbReference type="GO" id="GO:0046872">
    <property type="term" value="F:metal ion binding"/>
    <property type="evidence" value="ECO:0007669"/>
    <property type="project" value="UniProtKB-KW"/>
</dbReference>
<dbReference type="GO" id="GO:0016491">
    <property type="term" value="F:oxidoreductase activity"/>
    <property type="evidence" value="ECO:0007669"/>
    <property type="project" value="UniProtKB-KW"/>
</dbReference>
<dbReference type="GO" id="GO:0009263">
    <property type="term" value="P:deoxyribonucleotide biosynthetic process"/>
    <property type="evidence" value="ECO:0007669"/>
    <property type="project" value="InterPro"/>
</dbReference>
<dbReference type="CDD" id="cd07911">
    <property type="entry name" value="RNRR2_Rv0233_like"/>
    <property type="match status" value="1"/>
</dbReference>
<dbReference type="Gene3D" id="1.10.620.20">
    <property type="entry name" value="Ribonucleotide Reductase, subunit A"/>
    <property type="match status" value="1"/>
</dbReference>
<dbReference type="InterPro" id="IPR009078">
    <property type="entry name" value="Ferritin-like_SF"/>
</dbReference>
<dbReference type="InterPro" id="IPR033908">
    <property type="entry name" value="R2LOX"/>
</dbReference>
<dbReference type="InterPro" id="IPR012348">
    <property type="entry name" value="RNR-like"/>
</dbReference>
<dbReference type="InterPro" id="IPR000358">
    <property type="entry name" value="RNR_small_fam"/>
</dbReference>
<dbReference type="NCBIfam" id="NF006199">
    <property type="entry name" value="PRK08326.1-2"/>
    <property type="match status" value="1"/>
</dbReference>
<dbReference type="NCBIfam" id="NF006200">
    <property type="entry name" value="PRK08326.1-3"/>
    <property type="match status" value="1"/>
</dbReference>
<dbReference type="NCBIfam" id="NF006201">
    <property type="entry name" value="PRK08326.1-4"/>
    <property type="match status" value="1"/>
</dbReference>
<dbReference type="Pfam" id="PF00268">
    <property type="entry name" value="Ribonuc_red_sm"/>
    <property type="match status" value="1"/>
</dbReference>
<dbReference type="SUPFAM" id="SSF47240">
    <property type="entry name" value="Ferritin-like"/>
    <property type="match status" value="1"/>
</dbReference>
<comment type="function">
    <text evidence="1">Probable oxidase that might be involved in lipid metabolism.</text>
</comment>
<comment type="cofactor">
    <cofactor evidence="1">
        <name>Fe cation</name>
        <dbReference type="ChEBI" id="CHEBI:24875"/>
    </cofactor>
    <text evidence="1">Binds 1 Fe cation per subunit.</text>
</comment>
<comment type="cofactor">
    <cofactor evidence="1">
        <name>Mn(2+)</name>
        <dbReference type="ChEBI" id="CHEBI:29035"/>
    </cofactor>
    <text evidence="1">Binds 1 manganese ion per subunit. The iron and manganese ions form a dinuclear manganese-iron cluster.</text>
</comment>
<comment type="subunit">
    <text evidence="1">Homodimer.</text>
</comment>
<comment type="similarity">
    <text evidence="2">Belongs to the ribonucleoside diphosphate reductase small chain family. R2-like ligand binding oxidase subfamily.</text>
</comment>
<feature type="chain" id="PRO_0000375422" description="R2-like ligand binding oxidase">
    <location>
        <begin position="1"/>
        <end position="313"/>
    </location>
</feature>
<feature type="binding site" evidence="1">
    <location>
        <position position="68"/>
    </location>
    <ligand>
        <name>Mn(2+)</name>
        <dbReference type="ChEBI" id="CHEBI:29035"/>
    </ligand>
</feature>
<feature type="binding site" evidence="1">
    <location>
        <position position="101"/>
    </location>
    <ligand>
        <name>Fe cation</name>
        <dbReference type="ChEBI" id="CHEBI:24875"/>
    </ligand>
</feature>
<feature type="binding site" evidence="1">
    <location>
        <position position="101"/>
    </location>
    <ligand>
        <name>Mn(2+)</name>
        <dbReference type="ChEBI" id="CHEBI:29035"/>
    </ligand>
</feature>
<feature type="binding site" evidence="1">
    <location>
        <position position="104"/>
    </location>
    <ligand>
        <name>Mn(2+)</name>
        <dbReference type="ChEBI" id="CHEBI:29035"/>
    </ligand>
</feature>
<feature type="binding site" evidence="1">
    <location>
        <position position="167"/>
    </location>
    <ligand>
        <name>Fe cation</name>
        <dbReference type="ChEBI" id="CHEBI:24875"/>
    </ligand>
</feature>
<feature type="binding site" evidence="1">
    <location>
        <position position="202"/>
    </location>
    <ligand>
        <name>Fe cation</name>
        <dbReference type="ChEBI" id="CHEBI:24875"/>
    </ligand>
</feature>
<feature type="binding site" evidence="1">
    <location>
        <position position="205"/>
    </location>
    <ligand>
        <name>Fe cation</name>
        <dbReference type="ChEBI" id="CHEBI:24875"/>
    </ligand>
</feature>
<feature type="cross-link" description="3-(O4'-tyrosyl)-valine (Val-Tyr)" evidence="1">
    <location>
        <begin position="71"/>
        <end position="162"/>
    </location>
</feature>